<comment type="function">
    <text evidence="1">Reversibly transfers an adenylyl group from ATP to 4'-phosphopantetheine, yielding dephospho-CoA (dPCoA) and pyrophosphate.</text>
</comment>
<comment type="catalytic activity">
    <reaction evidence="1">
        <text>(R)-4'-phosphopantetheine + ATP + H(+) = 3'-dephospho-CoA + diphosphate</text>
        <dbReference type="Rhea" id="RHEA:19801"/>
        <dbReference type="ChEBI" id="CHEBI:15378"/>
        <dbReference type="ChEBI" id="CHEBI:30616"/>
        <dbReference type="ChEBI" id="CHEBI:33019"/>
        <dbReference type="ChEBI" id="CHEBI:57328"/>
        <dbReference type="ChEBI" id="CHEBI:61723"/>
        <dbReference type="EC" id="2.7.7.3"/>
    </reaction>
</comment>
<comment type="cofactor">
    <cofactor evidence="1">
        <name>Mg(2+)</name>
        <dbReference type="ChEBI" id="CHEBI:18420"/>
    </cofactor>
</comment>
<comment type="pathway">
    <text evidence="1">Cofactor biosynthesis; coenzyme A biosynthesis; CoA from (R)-pantothenate: step 4/5.</text>
</comment>
<comment type="subunit">
    <text evidence="1">Homohexamer.</text>
</comment>
<comment type="subcellular location">
    <subcellularLocation>
        <location evidence="1">Cytoplasm</location>
    </subcellularLocation>
</comment>
<comment type="similarity">
    <text evidence="1">Belongs to the bacterial CoaD family.</text>
</comment>
<accession>A4TSD3</accession>
<proteinExistence type="inferred from homology"/>
<name>COAD_YERPP</name>
<gene>
    <name evidence="1" type="primary">coaD</name>
    <name type="ordered locus">YPDSF_3852</name>
</gene>
<protein>
    <recommendedName>
        <fullName evidence="1">Phosphopantetheine adenylyltransferase</fullName>
        <ecNumber evidence="1">2.7.7.3</ecNumber>
    </recommendedName>
    <alternativeName>
        <fullName evidence="1">Dephospho-CoA pyrophosphorylase</fullName>
    </alternativeName>
    <alternativeName>
        <fullName evidence="1">Pantetheine-phosphate adenylyltransferase</fullName>
        <shortName evidence="1">PPAT</shortName>
    </alternativeName>
</protein>
<sequence>MITKAIYPGTFDPITNGHLDLVTRASAMFSHVILAIADSSSKKPMFTLDERVALAKKVTAPLKNVEVLGFSELMAEFAKKHNANILVRGLRSVSDFEYEWQLANMNRHLMPKLESVFLIPSEKWSFISSSLVKEVARHGGDITPFLPKPVTKALLAKLA</sequence>
<keyword id="KW-0067">ATP-binding</keyword>
<keyword id="KW-0173">Coenzyme A biosynthesis</keyword>
<keyword id="KW-0963">Cytoplasm</keyword>
<keyword id="KW-0460">Magnesium</keyword>
<keyword id="KW-0547">Nucleotide-binding</keyword>
<keyword id="KW-0548">Nucleotidyltransferase</keyword>
<keyword id="KW-0808">Transferase</keyword>
<organism>
    <name type="scientific">Yersinia pestis (strain Pestoides F)</name>
    <dbReference type="NCBI Taxonomy" id="386656"/>
    <lineage>
        <taxon>Bacteria</taxon>
        <taxon>Pseudomonadati</taxon>
        <taxon>Pseudomonadota</taxon>
        <taxon>Gammaproteobacteria</taxon>
        <taxon>Enterobacterales</taxon>
        <taxon>Yersiniaceae</taxon>
        <taxon>Yersinia</taxon>
    </lineage>
</organism>
<evidence type="ECO:0000255" key="1">
    <source>
        <dbReference type="HAMAP-Rule" id="MF_00151"/>
    </source>
</evidence>
<feature type="chain" id="PRO_1000011283" description="Phosphopantetheine adenylyltransferase">
    <location>
        <begin position="1"/>
        <end position="159"/>
    </location>
</feature>
<feature type="binding site" evidence="1">
    <location>
        <begin position="10"/>
        <end position="11"/>
    </location>
    <ligand>
        <name>ATP</name>
        <dbReference type="ChEBI" id="CHEBI:30616"/>
    </ligand>
</feature>
<feature type="binding site" evidence="1">
    <location>
        <position position="10"/>
    </location>
    <ligand>
        <name>substrate</name>
    </ligand>
</feature>
<feature type="binding site" evidence="1">
    <location>
        <position position="18"/>
    </location>
    <ligand>
        <name>ATP</name>
        <dbReference type="ChEBI" id="CHEBI:30616"/>
    </ligand>
</feature>
<feature type="binding site" evidence="1">
    <location>
        <position position="42"/>
    </location>
    <ligand>
        <name>substrate</name>
    </ligand>
</feature>
<feature type="binding site" evidence="1">
    <location>
        <position position="74"/>
    </location>
    <ligand>
        <name>substrate</name>
    </ligand>
</feature>
<feature type="binding site" evidence="1">
    <location>
        <position position="88"/>
    </location>
    <ligand>
        <name>substrate</name>
    </ligand>
</feature>
<feature type="binding site" evidence="1">
    <location>
        <begin position="89"/>
        <end position="91"/>
    </location>
    <ligand>
        <name>ATP</name>
        <dbReference type="ChEBI" id="CHEBI:30616"/>
    </ligand>
</feature>
<feature type="binding site" evidence="1">
    <location>
        <position position="99"/>
    </location>
    <ligand>
        <name>ATP</name>
        <dbReference type="ChEBI" id="CHEBI:30616"/>
    </ligand>
</feature>
<feature type="binding site" evidence="1">
    <location>
        <begin position="124"/>
        <end position="130"/>
    </location>
    <ligand>
        <name>ATP</name>
        <dbReference type="ChEBI" id="CHEBI:30616"/>
    </ligand>
</feature>
<feature type="site" description="Transition state stabilizer" evidence="1">
    <location>
        <position position="18"/>
    </location>
</feature>
<dbReference type="EC" id="2.7.7.3" evidence="1"/>
<dbReference type="EMBL" id="CP000668">
    <property type="protein sequence ID" value="ABP42195.1"/>
    <property type="molecule type" value="Genomic_DNA"/>
</dbReference>
<dbReference type="RefSeq" id="WP_002208988.1">
    <property type="nucleotide sequence ID" value="NZ_CP009715.1"/>
</dbReference>
<dbReference type="SMR" id="A4TSD3"/>
<dbReference type="GeneID" id="57974537"/>
<dbReference type="KEGG" id="ypp:YPDSF_3852"/>
<dbReference type="PATRIC" id="fig|386656.14.peg.666"/>
<dbReference type="UniPathway" id="UPA00241">
    <property type="reaction ID" value="UER00355"/>
</dbReference>
<dbReference type="GO" id="GO:0005737">
    <property type="term" value="C:cytoplasm"/>
    <property type="evidence" value="ECO:0007669"/>
    <property type="project" value="UniProtKB-SubCell"/>
</dbReference>
<dbReference type="GO" id="GO:0005524">
    <property type="term" value="F:ATP binding"/>
    <property type="evidence" value="ECO:0007669"/>
    <property type="project" value="UniProtKB-KW"/>
</dbReference>
<dbReference type="GO" id="GO:0004595">
    <property type="term" value="F:pantetheine-phosphate adenylyltransferase activity"/>
    <property type="evidence" value="ECO:0007669"/>
    <property type="project" value="UniProtKB-UniRule"/>
</dbReference>
<dbReference type="GO" id="GO:0015937">
    <property type="term" value="P:coenzyme A biosynthetic process"/>
    <property type="evidence" value="ECO:0007669"/>
    <property type="project" value="UniProtKB-UniRule"/>
</dbReference>
<dbReference type="CDD" id="cd02163">
    <property type="entry name" value="PPAT"/>
    <property type="match status" value="1"/>
</dbReference>
<dbReference type="FunFam" id="3.40.50.620:FF:000012">
    <property type="entry name" value="Phosphopantetheine adenylyltransferase"/>
    <property type="match status" value="1"/>
</dbReference>
<dbReference type="Gene3D" id="3.40.50.620">
    <property type="entry name" value="HUPs"/>
    <property type="match status" value="1"/>
</dbReference>
<dbReference type="HAMAP" id="MF_00151">
    <property type="entry name" value="PPAT_bact"/>
    <property type="match status" value="1"/>
</dbReference>
<dbReference type="InterPro" id="IPR004821">
    <property type="entry name" value="Cyt_trans-like"/>
</dbReference>
<dbReference type="InterPro" id="IPR001980">
    <property type="entry name" value="PPAT"/>
</dbReference>
<dbReference type="InterPro" id="IPR014729">
    <property type="entry name" value="Rossmann-like_a/b/a_fold"/>
</dbReference>
<dbReference type="NCBIfam" id="TIGR01510">
    <property type="entry name" value="coaD_prev_kdtB"/>
    <property type="match status" value="1"/>
</dbReference>
<dbReference type="NCBIfam" id="TIGR00125">
    <property type="entry name" value="cyt_tran_rel"/>
    <property type="match status" value="1"/>
</dbReference>
<dbReference type="PANTHER" id="PTHR21342">
    <property type="entry name" value="PHOSPHOPANTETHEINE ADENYLYLTRANSFERASE"/>
    <property type="match status" value="1"/>
</dbReference>
<dbReference type="PANTHER" id="PTHR21342:SF1">
    <property type="entry name" value="PHOSPHOPANTETHEINE ADENYLYLTRANSFERASE"/>
    <property type="match status" value="1"/>
</dbReference>
<dbReference type="Pfam" id="PF01467">
    <property type="entry name" value="CTP_transf_like"/>
    <property type="match status" value="1"/>
</dbReference>
<dbReference type="PRINTS" id="PR01020">
    <property type="entry name" value="LPSBIOSNTHSS"/>
</dbReference>
<dbReference type="SUPFAM" id="SSF52374">
    <property type="entry name" value="Nucleotidylyl transferase"/>
    <property type="match status" value="1"/>
</dbReference>
<reference key="1">
    <citation type="submission" date="2007-02" db="EMBL/GenBank/DDBJ databases">
        <title>Complete sequence of chromosome of Yersinia pestis Pestoides F.</title>
        <authorList>
            <consortium name="US DOE Joint Genome Institute"/>
            <person name="Copeland A."/>
            <person name="Lucas S."/>
            <person name="Lapidus A."/>
            <person name="Barry K."/>
            <person name="Detter J.C."/>
            <person name="Glavina del Rio T."/>
            <person name="Hammon N."/>
            <person name="Israni S."/>
            <person name="Dalin E."/>
            <person name="Tice H."/>
            <person name="Pitluck S."/>
            <person name="Di Bartolo G."/>
            <person name="Chain P."/>
            <person name="Malfatti S."/>
            <person name="Shin M."/>
            <person name="Vergez L."/>
            <person name="Schmutz J."/>
            <person name="Larimer F."/>
            <person name="Land M."/>
            <person name="Hauser L."/>
            <person name="Worsham P."/>
            <person name="Chu M."/>
            <person name="Bearden S."/>
            <person name="Garcia E."/>
            <person name="Richardson P."/>
        </authorList>
    </citation>
    <scope>NUCLEOTIDE SEQUENCE [LARGE SCALE GENOMIC DNA]</scope>
    <source>
        <strain>Pestoides F</strain>
    </source>
</reference>